<organism>
    <name type="scientific">Symphalangus syndactylus</name>
    <name type="common">Siamang</name>
    <name type="synonym">Hylobates syndactylus</name>
    <dbReference type="NCBI Taxonomy" id="9590"/>
    <lineage>
        <taxon>Eukaryota</taxon>
        <taxon>Metazoa</taxon>
        <taxon>Chordata</taxon>
        <taxon>Craniata</taxon>
        <taxon>Vertebrata</taxon>
        <taxon>Euteleostomi</taxon>
        <taxon>Mammalia</taxon>
        <taxon>Eutheria</taxon>
        <taxon>Euarchontoglires</taxon>
        <taxon>Primates</taxon>
        <taxon>Haplorrhini</taxon>
        <taxon>Catarrhini</taxon>
        <taxon>Hylobatidae</taxon>
        <taxon>Symphalangus</taxon>
    </lineage>
</organism>
<keyword id="KW-1015">Disulfide bond</keyword>
<keyword id="KW-0325">Glycoprotein</keyword>
<keyword id="KW-0964">Secreted</keyword>
<keyword id="KW-0732">Signal</keyword>
<accession>Q863J9</accession>
<reference key="1">
    <citation type="submission" date="2003-03" db="EMBL/GenBank/DDBJ databases">
        <title>LOC122650 on chromosome 14p11.1 is related to the RNase A superfamily and is uniquely expressed in lung.</title>
        <authorList>
            <person name="Devor E.J."/>
            <person name="Moffat-Wilson K.A."/>
        </authorList>
    </citation>
    <scope>NUCLEOTIDE SEQUENCE [GENOMIC DNA]</scope>
</reference>
<evidence type="ECO:0000250" key="1"/>
<evidence type="ECO:0000255" key="2"/>
<evidence type="ECO:0000305" key="3"/>
<proteinExistence type="inferred from homology"/>
<dbReference type="EMBL" id="AY263971">
    <property type="protein sequence ID" value="AAP21770.1"/>
    <property type="molecule type" value="Genomic_DNA"/>
</dbReference>
<dbReference type="SMR" id="Q863J9"/>
<dbReference type="GlyCosmos" id="Q863J9">
    <property type="glycosylation" value="2 sites, No reported glycans"/>
</dbReference>
<dbReference type="GO" id="GO:0005576">
    <property type="term" value="C:extracellular region"/>
    <property type="evidence" value="ECO:0007669"/>
    <property type="project" value="UniProtKB-SubCell"/>
</dbReference>
<dbReference type="GO" id="GO:0003676">
    <property type="term" value="F:nucleic acid binding"/>
    <property type="evidence" value="ECO:0007669"/>
    <property type="project" value="InterPro"/>
</dbReference>
<dbReference type="GO" id="GO:0050830">
    <property type="term" value="P:defense response to Gram-positive bacterium"/>
    <property type="evidence" value="ECO:0007669"/>
    <property type="project" value="TreeGrafter"/>
</dbReference>
<dbReference type="CDD" id="cd00163">
    <property type="entry name" value="RNase_A"/>
    <property type="match status" value="1"/>
</dbReference>
<dbReference type="FunFam" id="3.10.130.10:FF:000003">
    <property type="entry name" value="Inactive ribonuclease-like protein 9"/>
    <property type="match status" value="1"/>
</dbReference>
<dbReference type="Gene3D" id="3.10.130.10">
    <property type="entry name" value="Ribonuclease A-like domain"/>
    <property type="match status" value="1"/>
</dbReference>
<dbReference type="InterPro" id="IPR001427">
    <property type="entry name" value="RNaseA"/>
</dbReference>
<dbReference type="InterPro" id="IPR036816">
    <property type="entry name" value="RNaseA-like_dom_sf"/>
</dbReference>
<dbReference type="InterPro" id="IPR023412">
    <property type="entry name" value="RNaseA_domain"/>
</dbReference>
<dbReference type="PANTHER" id="PTHR11437:SF14">
    <property type="entry name" value="INACTIVE RIBONUCLEASE-LIKE PROTEIN 9"/>
    <property type="match status" value="1"/>
</dbReference>
<dbReference type="PANTHER" id="PTHR11437">
    <property type="entry name" value="RIBONUCLEASE"/>
    <property type="match status" value="1"/>
</dbReference>
<dbReference type="Pfam" id="PF00074">
    <property type="entry name" value="RnaseA"/>
    <property type="match status" value="1"/>
</dbReference>
<dbReference type="SMART" id="SM00092">
    <property type="entry name" value="RNAse_Pc"/>
    <property type="match status" value="1"/>
</dbReference>
<dbReference type="SUPFAM" id="SSF54076">
    <property type="entry name" value="RNase A-like"/>
    <property type="match status" value="1"/>
</dbReference>
<gene>
    <name type="primary">RNASE9</name>
</gene>
<name>RNAS9_SYMSY</name>
<feature type="signal peptide" evidence="2">
    <location>
        <begin position="1"/>
        <end position="26"/>
    </location>
</feature>
<feature type="chain" id="PRO_0000030952" description="Inactive ribonuclease-like protein 9">
    <location>
        <begin position="27"/>
        <end position="204"/>
    </location>
</feature>
<feature type="glycosylation site" description="N-linked (GlcNAc...) asparagine" evidence="2">
    <location>
        <position position="130"/>
    </location>
</feature>
<feature type="glycosylation site" description="N-linked (GlcNAc...) asparagine" evidence="2">
    <location>
        <position position="142"/>
    </location>
</feature>
<feature type="disulfide bond" evidence="1">
    <location>
        <begin position="97"/>
        <end position="152"/>
    </location>
</feature>
<feature type="disulfide bond" evidence="1">
    <location>
        <begin position="115"/>
        <end position="167"/>
    </location>
</feature>
<feature type="disulfide bond" evidence="1">
    <location>
        <begin position="122"/>
        <end position="129"/>
    </location>
</feature>
<protein>
    <recommendedName>
        <fullName>Inactive ribonuclease-like protein 9</fullName>
    </recommendedName>
</protein>
<sequence>MMRTLITIHPLPLLLLLQQLLQPVQFQEVDTDFDFSEDKKEEFEEYLEQFFSTGPTRPPTKEKVKRRVLIEPGMPLNHIEYCNHEIMGKNVYYKHRCVAEHYFLLMQYDELQNICYNRFVPCKNGIRKCNRSKGLVEGVYCNLTEAFEIPACKYESFYRKGYVLITCAWQNELQKLIPHTINDLVEPSEHRSFLSEDGVFVIPP</sequence>
<comment type="function">
    <text evidence="1">Does not exhibit any ribonuclease activity.</text>
</comment>
<comment type="subcellular location">
    <subcellularLocation>
        <location evidence="3">Secreted</location>
    </subcellularLocation>
</comment>
<comment type="similarity">
    <text evidence="3">Belongs to the pancreatic ribonuclease family.</text>
</comment>